<reference key="1">
    <citation type="submission" date="1997-03" db="EMBL/GenBank/DDBJ databases">
        <title>A 148 kbp sequence of the region between 35 and 47 degree of the Bacillus subtilis genome.</title>
        <authorList>
            <person name="Kasahara Y."/>
            <person name="Nakai S."/>
            <person name="Lee S."/>
            <person name="Sadaie Y."/>
            <person name="Ogasawara N."/>
        </authorList>
    </citation>
    <scope>NUCLEOTIDE SEQUENCE [GENOMIC DNA]</scope>
    <source>
        <strain>168</strain>
    </source>
</reference>
<reference key="2">
    <citation type="journal article" date="1997" name="Nature">
        <title>The complete genome sequence of the Gram-positive bacterium Bacillus subtilis.</title>
        <authorList>
            <person name="Kunst F."/>
            <person name="Ogasawara N."/>
            <person name="Moszer I."/>
            <person name="Albertini A.M."/>
            <person name="Alloni G."/>
            <person name="Azevedo V."/>
            <person name="Bertero M.G."/>
            <person name="Bessieres P."/>
            <person name="Bolotin A."/>
            <person name="Borchert S."/>
            <person name="Borriss R."/>
            <person name="Boursier L."/>
            <person name="Brans A."/>
            <person name="Braun M."/>
            <person name="Brignell S.C."/>
            <person name="Bron S."/>
            <person name="Brouillet S."/>
            <person name="Bruschi C.V."/>
            <person name="Caldwell B."/>
            <person name="Capuano V."/>
            <person name="Carter N.M."/>
            <person name="Choi S.-K."/>
            <person name="Codani J.-J."/>
            <person name="Connerton I.F."/>
            <person name="Cummings N.J."/>
            <person name="Daniel R.A."/>
            <person name="Denizot F."/>
            <person name="Devine K.M."/>
            <person name="Duesterhoeft A."/>
            <person name="Ehrlich S.D."/>
            <person name="Emmerson P.T."/>
            <person name="Entian K.-D."/>
            <person name="Errington J."/>
            <person name="Fabret C."/>
            <person name="Ferrari E."/>
            <person name="Foulger D."/>
            <person name="Fritz C."/>
            <person name="Fujita M."/>
            <person name="Fujita Y."/>
            <person name="Fuma S."/>
            <person name="Galizzi A."/>
            <person name="Galleron N."/>
            <person name="Ghim S.-Y."/>
            <person name="Glaser P."/>
            <person name="Goffeau A."/>
            <person name="Golightly E.J."/>
            <person name="Grandi G."/>
            <person name="Guiseppi G."/>
            <person name="Guy B.J."/>
            <person name="Haga K."/>
            <person name="Haiech J."/>
            <person name="Harwood C.R."/>
            <person name="Henaut A."/>
            <person name="Hilbert H."/>
            <person name="Holsappel S."/>
            <person name="Hosono S."/>
            <person name="Hullo M.-F."/>
            <person name="Itaya M."/>
            <person name="Jones L.-M."/>
            <person name="Joris B."/>
            <person name="Karamata D."/>
            <person name="Kasahara Y."/>
            <person name="Klaerr-Blanchard M."/>
            <person name="Klein C."/>
            <person name="Kobayashi Y."/>
            <person name="Koetter P."/>
            <person name="Koningstein G."/>
            <person name="Krogh S."/>
            <person name="Kumano M."/>
            <person name="Kurita K."/>
            <person name="Lapidus A."/>
            <person name="Lardinois S."/>
            <person name="Lauber J."/>
            <person name="Lazarevic V."/>
            <person name="Lee S.-M."/>
            <person name="Levine A."/>
            <person name="Liu H."/>
            <person name="Masuda S."/>
            <person name="Mauel C."/>
            <person name="Medigue C."/>
            <person name="Medina N."/>
            <person name="Mellado R.P."/>
            <person name="Mizuno M."/>
            <person name="Moestl D."/>
            <person name="Nakai S."/>
            <person name="Noback M."/>
            <person name="Noone D."/>
            <person name="O'Reilly M."/>
            <person name="Ogawa K."/>
            <person name="Ogiwara A."/>
            <person name="Oudega B."/>
            <person name="Park S.-H."/>
            <person name="Parro V."/>
            <person name="Pohl T.M."/>
            <person name="Portetelle D."/>
            <person name="Porwollik S."/>
            <person name="Prescott A.M."/>
            <person name="Presecan E."/>
            <person name="Pujic P."/>
            <person name="Purnelle B."/>
            <person name="Rapoport G."/>
            <person name="Rey M."/>
            <person name="Reynolds S."/>
            <person name="Rieger M."/>
            <person name="Rivolta C."/>
            <person name="Rocha E."/>
            <person name="Roche B."/>
            <person name="Rose M."/>
            <person name="Sadaie Y."/>
            <person name="Sato T."/>
            <person name="Scanlan E."/>
            <person name="Schleich S."/>
            <person name="Schroeter R."/>
            <person name="Scoffone F."/>
            <person name="Sekiguchi J."/>
            <person name="Sekowska A."/>
            <person name="Seror S.J."/>
            <person name="Serror P."/>
            <person name="Shin B.-S."/>
            <person name="Soldo B."/>
            <person name="Sorokin A."/>
            <person name="Tacconi E."/>
            <person name="Takagi T."/>
            <person name="Takahashi H."/>
            <person name="Takemaru K."/>
            <person name="Takeuchi M."/>
            <person name="Tamakoshi A."/>
            <person name="Tanaka T."/>
            <person name="Terpstra P."/>
            <person name="Tognoni A."/>
            <person name="Tosato V."/>
            <person name="Uchiyama S."/>
            <person name="Vandenbol M."/>
            <person name="Vannier F."/>
            <person name="Vassarotti A."/>
            <person name="Viari A."/>
            <person name="Wambutt R."/>
            <person name="Wedler E."/>
            <person name="Wedler H."/>
            <person name="Weitzenegger T."/>
            <person name="Winters P."/>
            <person name="Wipat A."/>
            <person name="Yamamoto H."/>
            <person name="Yamane K."/>
            <person name="Yasumoto K."/>
            <person name="Yata K."/>
            <person name="Yoshida K."/>
            <person name="Yoshikawa H.-F."/>
            <person name="Zumstein E."/>
            <person name="Yoshikawa H."/>
            <person name="Danchin A."/>
        </authorList>
    </citation>
    <scope>NUCLEOTIDE SEQUENCE [LARGE SCALE GENOMIC DNA]</scope>
    <source>
        <strain>168</strain>
    </source>
</reference>
<feature type="chain" id="PRO_0000360074" description="Ftsk domain-containing protein YdcQ">
    <location>
        <begin position="1"/>
        <end position="480"/>
    </location>
</feature>
<feature type="transmembrane region" description="Helical" evidence="1">
    <location>
        <begin position="25"/>
        <end position="45"/>
    </location>
</feature>
<feature type="transmembrane region" description="Helical" evidence="1">
    <location>
        <begin position="71"/>
        <end position="91"/>
    </location>
</feature>
<feature type="domain" description="FtsK" evidence="2">
    <location>
        <begin position="217"/>
        <end position="399"/>
    </location>
</feature>
<feature type="binding site" evidence="2">
    <location>
        <begin position="234"/>
        <end position="241"/>
    </location>
    <ligand>
        <name>ATP</name>
        <dbReference type="ChEBI" id="CHEBI:30616"/>
    </ligand>
</feature>
<comment type="subcellular location">
    <subcellularLocation>
        <location evidence="3">Cell membrane</location>
        <topology evidence="3">Multi-pass membrane protein</topology>
    </subcellularLocation>
</comment>
<accession>P96634</accession>
<accession>Q797J8</accession>
<protein>
    <recommendedName>
        <fullName>Ftsk domain-containing protein YdcQ</fullName>
    </recommendedName>
</protein>
<name>YDCQ_BACSU</name>
<proteinExistence type="predicted"/>
<organism>
    <name type="scientific">Bacillus subtilis (strain 168)</name>
    <dbReference type="NCBI Taxonomy" id="224308"/>
    <lineage>
        <taxon>Bacteria</taxon>
        <taxon>Bacillati</taxon>
        <taxon>Bacillota</taxon>
        <taxon>Bacilli</taxon>
        <taxon>Bacillales</taxon>
        <taxon>Bacillaceae</taxon>
        <taxon>Bacillus</taxon>
    </lineage>
</organism>
<evidence type="ECO:0000255" key="1"/>
<evidence type="ECO:0000255" key="2">
    <source>
        <dbReference type="PROSITE-ProRule" id="PRU00289"/>
    </source>
</evidence>
<evidence type="ECO:0000305" key="3"/>
<gene>
    <name type="primary">ydcQ</name>
    <name type="ordered locus">BSU04860</name>
</gene>
<dbReference type="EMBL" id="AB001488">
    <property type="protein sequence ID" value="BAA19323.1"/>
    <property type="molecule type" value="Genomic_DNA"/>
</dbReference>
<dbReference type="EMBL" id="AL009126">
    <property type="protein sequence ID" value="CAB12293.1"/>
    <property type="molecule type" value="Genomic_DNA"/>
</dbReference>
<dbReference type="PIR" id="F69774">
    <property type="entry name" value="F69774"/>
</dbReference>
<dbReference type="SMR" id="P96634"/>
<dbReference type="FunCoup" id="P96634">
    <property type="interactions" value="136"/>
</dbReference>
<dbReference type="STRING" id="224308.BSU04860"/>
<dbReference type="PaxDb" id="224308-BSU04860"/>
<dbReference type="EnsemblBacteria" id="CAB12293">
    <property type="protein sequence ID" value="CAB12293"/>
    <property type="gene ID" value="BSU_04860"/>
</dbReference>
<dbReference type="GeneID" id="939923"/>
<dbReference type="KEGG" id="bsu:BSU04860"/>
<dbReference type="PATRIC" id="fig|224308.179.peg.517"/>
<dbReference type="eggNOG" id="COG1674">
    <property type="taxonomic scope" value="Bacteria"/>
</dbReference>
<dbReference type="InParanoid" id="P96634"/>
<dbReference type="OrthoDB" id="9807790at2"/>
<dbReference type="PhylomeDB" id="P96634"/>
<dbReference type="BioCyc" id="BSUB:BSU04860-MONOMER"/>
<dbReference type="Proteomes" id="UP000001570">
    <property type="component" value="Chromosome"/>
</dbReference>
<dbReference type="GO" id="GO:0005886">
    <property type="term" value="C:plasma membrane"/>
    <property type="evidence" value="ECO:0007669"/>
    <property type="project" value="UniProtKB-SubCell"/>
</dbReference>
<dbReference type="GO" id="GO:0005524">
    <property type="term" value="F:ATP binding"/>
    <property type="evidence" value="ECO:0007669"/>
    <property type="project" value="UniProtKB-KW"/>
</dbReference>
<dbReference type="GO" id="GO:0003677">
    <property type="term" value="F:DNA binding"/>
    <property type="evidence" value="ECO:0007669"/>
    <property type="project" value="InterPro"/>
</dbReference>
<dbReference type="GO" id="GO:0015616">
    <property type="term" value="F:DNA translocase activity"/>
    <property type="evidence" value="ECO:0000318"/>
    <property type="project" value="GO_Central"/>
</dbReference>
<dbReference type="Gene3D" id="3.40.50.300">
    <property type="entry name" value="P-loop containing nucleotide triphosphate hydrolases"/>
    <property type="match status" value="1"/>
</dbReference>
<dbReference type="InterPro" id="IPR050206">
    <property type="entry name" value="FtsK/SpoIIIE/SftA"/>
</dbReference>
<dbReference type="InterPro" id="IPR002543">
    <property type="entry name" value="FtsK_dom"/>
</dbReference>
<dbReference type="InterPro" id="IPR027417">
    <property type="entry name" value="P-loop_NTPase"/>
</dbReference>
<dbReference type="PANTHER" id="PTHR22683:SF47">
    <property type="entry name" value="FTSK DOMAIN-CONTAINING PROTEIN YDCQ"/>
    <property type="match status" value="1"/>
</dbReference>
<dbReference type="PANTHER" id="PTHR22683">
    <property type="entry name" value="SPORULATION PROTEIN RELATED"/>
    <property type="match status" value="1"/>
</dbReference>
<dbReference type="SUPFAM" id="SSF52540">
    <property type="entry name" value="P-loop containing nucleoside triphosphate hydrolases"/>
    <property type="match status" value="1"/>
</dbReference>
<dbReference type="PROSITE" id="PS50901">
    <property type="entry name" value="FTSK"/>
    <property type="match status" value="1"/>
</dbReference>
<sequence length="480" mass="54742">MSDFLNKRFWKYRGKRIRPYMRNNVKLAGAIIFVPVFLLSMFLFWREQLIHFDLSQVIKNFEWNVPLIIKSVLCSVLIAVGSIVASYFLLFDSYKKILHRQKIAKMIFSNKFYEKENVKVRKIFSNETDSKEKITYFPRMYYQVKNNHIYIRIAMDMSRFQNRFLDLGKDLENGLFCDLVDKQMEEGFVCFKLLYDVKKNRISIDDAVAENGVLPLMKHISWQFDKLPHMLIAGGTGGGKTYFMLTIIKACVGLGADVRILDPKNADLADLEEVLPKKVYSQKNGILMCLRKSVDGMMERMDEMKQMSNYKTGENYAYLGLKPVFIFFDEYVAFMDLLDMKERNEALSYMKQLVMLGRQAGYFLVLGAQRPDAKYLADGIRDQFSFRVSLGLMSDTGYGMMFGDVEKAYVNKKETGRGYANVGTGSVLEFYSPIVPKGYDFMSSIKNALVGVEGAQATAVASGSVSDQTASGEGVSEANG</sequence>
<keyword id="KW-0067">ATP-binding</keyword>
<keyword id="KW-1003">Cell membrane</keyword>
<keyword id="KW-0472">Membrane</keyword>
<keyword id="KW-0547">Nucleotide-binding</keyword>
<keyword id="KW-1185">Reference proteome</keyword>
<keyword id="KW-0812">Transmembrane</keyword>
<keyword id="KW-1133">Transmembrane helix</keyword>